<organism>
    <name type="scientific">Clostridium acetobutylicum (strain ATCC 824 / DSM 792 / JCM 1419 / IAM 19013 / LMG 5710 / NBRC 13948 / NRRL B-527 / VKM B-1787 / 2291 / W)</name>
    <dbReference type="NCBI Taxonomy" id="272562"/>
    <lineage>
        <taxon>Bacteria</taxon>
        <taxon>Bacillati</taxon>
        <taxon>Bacillota</taxon>
        <taxon>Clostridia</taxon>
        <taxon>Eubacteriales</taxon>
        <taxon>Clostridiaceae</taxon>
        <taxon>Clostridium</taxon>
    </lineage>
</organism>
<comment type="function">
    <text evidence="1">Required for morphogenesis under gluconeogenic growth conditions.</text>
</comment>
<comment type="subcellular location">
    <subcellularLocation>
        <location evidence="1">Cytoplasm</location>
    </subcellularLocation>
</comment>
<comment type="similarity">
    <text evidence="1">Belongs to the gluconeogenesis factor family.</text>
</comment>
<gene>
    <name type="ordered locus">CA_C0512</name>
</gene>
<protein>
    <recommendedName>
        <fullName evidence="1">Putative gluconeogenesis factor</fullName>
    </recommendedName>
</protein>
<reference key="1">
    <citation type="journal article" date="2001" name="J. Bacteriol.">
        <title>Genome sequence and comparative analysis of the solvent-producing bacterium Clostridium acetobutylicum.</title>
        <authorList>
            <person name="Noelling J."/>
            <person name="Breton G."/>
            <person name="Omelchenko M.V."/>
            <person name="Makarova K.S."/>
            <person name="Zeng Q."/>
            <person name="Gibson R."/>
            <person name="Lee H.M."/>
            <person name="Dubois J."/>
            <person name="Qiu D."/>
            <person name="Hitti J."/>
            <person name="Wolf Y.I."/>
            <person name="Tatusov R.L."/>
            <person name="Sabathe F."/>
            <person name="Doucette-Stamm L.A."/>
            <person name="Soucaille P."/>
            <person name="Daly M.J."/>
            <person name="Bennett G.N."/>
            <person name="Koonin E.V."/>
            <person name="Smith D.R."/>
        </authorList>
    </citation>
    <scope>NUCLEOTIDE SEQUENCE [LARGE SCALE GENOMIC DNA]</scope>
    <source>
        <strain>ATCC 824 / DSM 792 / JCM 1419 / IAM 19013 / LMG 5710 / NBRC 13948 / NRRL B-527 / VKM B-1787 / 2291 / W</strain>
    </source>
</reference>
<evidence type="ECO:0000255" key="1">
    <source>
        <dbReference type="HAMAP-Rule" id="MF_00973"/>
    </source>
</evidence>
<name>GNGF_CLOAB</name>
<accession>Q97LP2</accession>
<proteinExistence type="inferred from homology"/>
<keyword id="KW-0963">Cytoplasm</keyword>
<keyword id="KW-1185">Reference proteome</keyword>
<feature type="chain" id="PRO_0000107805" description="Putative gluconeogenesis factor">
    <location>
        <begin position="1"/>
        <end position="451"/>
    </location>
</feature>
<sequence length="451" mass="50074">MKFIDWIKPGIKLKRWIMLGGMGVLFISFALAELITKGSYYNVYYKAFYIFLIVVGAFILYISLTQGMKSIISLINKGYLNVSLDSRKLGNLIYEKRLLVKGPKIVAIGGGTGLSTMLRGLKYYTSNITAVVTVADDGGGSGALREDLGILPPGDIRNCILALSDTEPLMEDLLQYRFKDGRLKNQSFGNLFLAAMDGISTNFEEAVHKMSSVLAVTGKVLPVTLDNVVLKAKLKNGVVVEGESNIPEQAILYESPIEKIFIEPENARALHETVQAIKEADAVILGPGSLFTSVIPNLLVKDIGNALLKTKALKLYVSNIMTQPGETDNFSVSDHVNAITKHVGGKVVDYTLVNNGTVSEKLKKKYFEKTSELVKIDKNELDKIGVGIVEGNFIKIKDGFVRHDSDEIAKILVETIMDKKLFYDRKKIIEYFYLSQRLKENRKLEKENRGN</sequence>
<dbReference type="EMBL" id="AE001437">
    <property type="protein sequence ID" value="AAK78492.1"/>
    <property type="molecule type" value="Genomic_DNA"/>
</dbReference>
<dbReference type="PIR" id="A96963">
    <property type="entry name" value="A96963"/>
</dbReference>
<dbReference type="RefSeq" id="NP_347152.1">
    <property type="nucleotide sequence ID" value="NC_003030.1"/>
</dbReference>
<dbReference type="RefSeq" id="WP_010963834.1">
    <property type="nucleotide sequence ID" value="NC_003030.1"/>
</dbReference>
<dbReference type="SMR" id="Q97LP2"/>
<dbReference type="STRING" id="272562.CA_C0512"/>
<dbReference type="KEGG" id="cac:CA_C0512"/>
<dbReference type="PATRIC" id="fig|272562.8.peg.711"/>
<dbReference type="eggNOG" id="COG0391">
    <property type="taxonomic scope" value="Bacteria"/>
</dbReference>
<dbReference type="HOGENOM" id="CLU_044041_0_0_9"/>
<dbReference type="OrthoDB" id="9783842at2"/>
<dbReference type="Proteomes" id="UP000000814">
    <property type="component" value="Chromosome"/>
</dbReference>
<dbReference type="GO" id="GO:0005737">
    <property type="term" value="C:cytoplasm"/>
    <property type="evidence" value="ECO:0007669"/>
    <property type="project" value="UniProtKB-SubCell"/>
</dbReference>
<dbReference type="GO" id="GO:0043743">
    <property type="term" value="F:LPPG:FO 2-phospho-L-lactate transferase activity"/>
    <property type="evidence" value="ECO:0007669"/>
    <property type="project" value="InterPro"/>
</dbReference>
<dbReference type="GO" id="GO:0008360">
    <property type="term" value="P:regulation of cell shape"/>
    <property type="evidence" value="ECO:0007669"/>
    <property type="project" value="UniProtKB-UniRule"/>
</dbReference>
<dbReference type="CDD" id="cd07187">
    <property type="entry name" value="YvcK_like"/>
    <property type="match status" value="1"/>
</dbReference>
<dbReference type="Gene3D" id="3.40.50.10680">
    <property type="entry name" value="CofD-like domains"/>
    <property type="match status" value="1"/>
</dbReference>
<dbReference type="HAMAP" id="MF_00973">
    <property type="entry name" value="Gluconeogen_factor"/>
    <property type="match status" value="1"/>
</dbReference>
<dbReference type="InterPro" id="IPR002882">
    <property type="entry name" value="CofD"/>
</dbReference>
<dbReference type="InterPro" id="IPR038136">
    <property type="entry name" value="CofD-like_dom_sf"/>
</dbReference>
<dbReference type="InterPro" id="IPR010119">
    <property type="entry name" value="Gluconeogen_factor"/>
</dbReference>
<dbReference type="NCBIfam" id="TIGR01826">
    <property type="entry name" value="CofD_related"/>
    <property type="match status" value="1"/>
</dbReference>
<dbReference type="PANTHER" id="PTHR30135:SF3">
    <property type="entry name" value="GLUCONEOGENESIS FACTOR-RELATED"/>
    <property type="match status" value="1"/>
</dbReference>
<dbReference type="PANTHER" id="PTHR30135">
    <property type="entry name" value="UNCHARACTERIZED PROTEIN YVCK-RELATED"/>
    <property type="match status" value="1"/>
</dbReference>
<dbReference type="Pfam" id="PF01933">
    <property type="entry name" value="CofD"/>
    <property type="match status" value="1"/>
</dbReference>
<dbReference type="SUPFAM" id="SSF142338">
    <property type="entry name" value="CofD-like"/>
    <property type="match status" value="1"/>
</dbReference>